<accession>Q73TE7</accession>
<comment type="subunit">
    <text evidence="1">Part of the 50S ribosomal subunit.</text>
</comment>
<comment type="similarity">
    <text evidence="2">Belongs to the bacterial ribosomal protein bL31 family. Type B subfamily.</text>
</comment>
<feature type="chain" id="PRO_0000173237" description="Large ribosomal subunit protein bL31B">
    <location>
        <begin position="1"/>
        <end position="97"/>
    </location>
</feature>
<evidence type="ECO:0000250" key="1"/>
<evidence type="ECO:0000305" key="2"/>
<organism>
    <name type="scientific">Mycolicibacterium paratuberculosis (strain ATCC BAA-968 / K-10)</name>
    <name type="common">Mycobacterium paratuberculosis</name>
    <dbReference type="NCBI Taxonomy" id="262316"/>
    <lineage>
        <taxon>Bacteria</taxon>
        <taxon>Bacillati</taxon>
        <taxon>Actinomycetota</taxon>
        <taxon>Actinomycetes</taxon>
        <taxon>Mycobacteriales</taxon>
        <taxon>Mycobacteriaceae</taxon>
        <taxon>Mycobacterium</taxon>
        <taxon>Mycobacterium avium complex (MAC)</taxon>
    </lineage>
</organism>
<protein>
    <recommendedName>
        <fullName evidence="2">Large ribosomal subunit protein bL31B</fullName>
    </recommendedName>
    <alternativeName>
        <fullName>50S ribosomal protein L31 type B</fullName>
    </alternativeName>
</protein>
<reference key="1">
    <citation type="journal article" date="2005" name="Proc. Natl. Acad. Sci. U.S.A.">
        <title>The complete genome sequence of Mycobacterium avium subspecies paratuberculosis.</title>
        <authorList>
            <person name="Li L."/>
            <person name="Bannantine J.P."/>
            <person name="Zhang Q."/>
            <person name="Amonsin A."/>
            <person name="May B.J."/>
            <person name="Alt D."/>
            <person name="Banerji N."/>
            <person name="Kanjilal S."/>
            <person name="Kapur V."/>
        </authorList>
    </citation>
    <scope>NUCLEOTIDE SEQUENCE [LARGE SCALE GENOMIC DNA]</scope>
    <source>
        <strain>ATCC BAA-968 / K-10</strain>
    </source>
</reference>
<proteinExistence type="inferred from homology"/>
<gene>
    <name type="primary">rpmE2</name>
    <name type="ordered locus">MAP_3771</name>
</gene>
<name>RL31B_MYCPA</name>
<keyword id="KW-1185">Reference proteome</keyword>
<keyword id="KW-0687">Ribonucleoprotein</keyword>
<keyword id="KW-0689">Ribosomal protein</keyword>
<dbReference type="EMBL" id="AE016958">
    <property type="protein sequence ID" value="AAS06321.1"/>
    <property type="molecule type" value="Genomic_DNA"/>
</dbReference>
<dbReference type="RefSeq" id="WP_003873953.1">
    <property type="nucleotide sequence ID" value="NZ_CP106873.1"/>
</dbReference>
<dbReference type="SMR" id="Q73TE7"/>
<dbReference type="STRING" id="262316.MAP_3771"/>
<dbReference type="KEGG" id="mpa:MAP_3771"/>
<dbReference type="eggNOG" id="COG0254">
    <property type="taxonomic scope" value="Bacteria"/>
</dbReference>
<dbReference type="HOGENOM" id="CLU_114306_2_1_11"/>
<dbReference type="Proteomes" id="UP000000580">
    <property type="component" value="Chromosome"/>
</dbReference>
<dbReference type="GO" id="GO:1990904">
    <property type="term" value="C:ribonucleoprotein complex"/>
    <property type="evidence" value="ECO:0007669"/>
    <property type="project" value="UniProtKB-KW"/>
</dbReference>
<dbReference type="GO" id="GO:0005840">
    <property type="term" value="C:ribosome"/>
    <property type="evidence" value="ECO:0007669"/>
    <property type="project" value="UniProtKB-KW"/>
</dbReference>
<dbReference type="GO" id="GO:0003735">
    <property type="term" value="F:structural constituent of ribosome"/>
    <property type="evidence" value="ECO:0007669"/>
    <property type="project" value="InterPro"/>
</dbReference>
<dbReference type="GO" id="GO:0006412">
    <property type="term" value="P:translation"/>
    <property type="evidence" value="ECO:0007669"/>
    <property type="project" value="InterPro"/>
</dbReference>
<dbReference type="Gene3D" id="4.10.830.30">
    <property type="entry name" value="Ribosomal protein L31"/>
    <property type="match status" value="1"/>
</dbReference>
<dbReference type="InterPro" id="IPR034704">
    <property type="entry name" value="Ribosomal_bL28/bL31-like_sf"/>
</dbReference>
<dbReference type="InterPro" id="IPR002150">
    <property type="entry name" value="Ribosomal_bL31"/>
</dbReference>
<dbReference type="InterPro" id="IPR027493">
    <property type="entry name" value="Ribosomal_bL31_B"/>
</dbReference>
<dbReference type="InterPro" id="IPR042105">
    <property type="entry name" value="Ribosomal_bL31_sf"/>
</dbReference>
<dbReference type="NCBIfam" id="TIGR00105">
    <property type="entry name" value="L31"/>
    <property type="match status" value="1"/>
</dbReference>
<dbReference type="NCBIfam" id="NF002462">
    <property type="entry name" value="PRK01678.1"/>
    <property type="match status" value="1"/>
</dbReference>
<dbReference type="PANTHER" id="PTHR33280">
    <property type="entry name" value="50S RIBOSOMAL PROTEIN L31, CHLOROPLASTIC"/>
    <property type="match status" value="1"/>
</dbReference>
<dbReference type="PANTHER" id="PTHR33280:SF1">
    <property type="entry name" value="LARGE RIBOSOMAL SUBUNIT PROTEIN BL31C"/>
    <property type="match status" value="1"/>
</dbReference>
<dbReference type="Pfam" id="PF01197">
    <property type="entry name" value="Ribosomal_L31"/>
    <property type="match status" value="1"/>
</dbReference>
<dbReference type="PRINTS" id="PR01249">
    <property type="entry name" value="RIBOSOMALL31"/>
</dbReference>
<dbReference type="SUPFAM" id="SSF143800">
    <property type="entry name" value="L28p-like"/>
    <property type="match status" value="1"/>
</dbReference>
<dbReference type="PROSITE" id="PS01143">
    <property type="entry name" value="RIBOSOMAL_L31"/>
    <property type="match status" value="1"/>
</dbReference>
<sequence>MKSGIHPDYHPVVFQDATTGATFLTRSTITSSRTIEWETPHGVRTYPLVVVEITSDSHPFWTGSRRIVDTAGQVEKFHRRYGSRRQTNHRDDAAHSP</sequence>